<keyword id="KW-0133">Cell shape</keyword>
<keyword id="KW-0961">Cell wall biogenesis/degradation</keyword>
<keyword id="KW-0413">Isomerase</keyword>
<keyword id="KW-0573">Peptidoglycan synthesis</keyword>
<comment type="function">
    <text evidence="1">Provides the (R)-glutamate required for cell wall biosynthesis.</text>
</comment>
<comment type="catalytic activity">
    <reaction evidence="1">
        <text>L-glutamate = D-glutamate</text>
        <dbReference type="Rhea" id="RHEA:12813"/>
        <dbReference type="ChEBI" id="CHEBI:29985"/>
        <dbReference type="ChEBI" id="CHEBI:29986"/>
        <dbReference type="EC" id="5.1.1.3"/>
    </reaction>
</comment>
<comment type="pathway">
    <text evidence="1">Cell wall biogenesis; peptidoglycan biosynthesis.</text>
</comment>
<comment type="similarity">
    <text evidence="1">Belongs to the aspartate/glutamate racemases family.</text>
</comment>
<evidence type="ECO:0000255" key="1">
    <source>
        <dbReference type="HAMAP-Rule" id="MF_00258"/>
    </source>
</evidence>
<protein>
    <recommendedName>
        <fullName evidence="1">Glutamate racemase</fullName>
        <ecNumber evidence="1">5.1.1.3</ecNumber>
    </recommendedName>
</protein>
<organism>
    <name type="scientific">Aliivibrio salmonicida (strain LFI1238)</name>
    <name type="common">Vibrio salmonicida (strain LFI1238)</name>
    <dbReference type="NCBI Taxonomy" id="316275"/>
    <lineage>
        <taxon>Bacteria</taxon>
        <taxon>Pseudomonadati</taxon>
        <taxon>Pseudomonadota</taxon>
        <taxon>Gammaproteobacteria</taxon>
        <taxon>Vibrionales</taxon>
        <taxon>Vibrionaceae</taxon>
        <taxon>Aliivibrio</taxon>
    </lineage>
</organism>
<reference key="1">
    <citation type="journal article" date="2008" name="BMC Genomics">
        <title>The genome sequence of the fish pathogen Aliivibrio salmonicida strain LFI1238 shows extensive evidence of gene decay.</title>
        <authorList>
            <person name="Hjerde E."/>
            <person name="Lorentzen M.S."/>
            <person name="Holden M.T."/>
            <person name="Seeger K."/>
            <person name="Paulsen S."/>
            <person name="Bason N."/>
            <person name="Churcher C."/>
            <person name="Harris D."/>
            <person name="Norbertczak H."/>
            <person name="Quail M.A."/>
            <person name="Sanders S."/>
            <person name="Thurston S."/>
            <person name="Parkhill J."/>
            <person name="Willassen N.P."/>
            <person name="Thomson N.R."/>
        </authorList>
    </citation>
    <scope>NUCLEOTIDE SEQUENCE [LARGE SCALE GENOMIC DNA]</scope>
    <source>
        <strain>LFI1238</strain>
    </source>
</reference>
<accession>B6ENT1</accession>
<sequence length="265" mass="29351">MPKNILIFDSGIGGLSVFKDIRYQIPLAKYIYAFDNAGFPYGELTEDILIERTSYIIQKLCHRHKIDIVVIACNTASTVVLPTLRTLLSIPVVGVVPAIKPAALVSQKIGLLATPATIKRSYTFDLIKSFASISDVKLLGSTRLVEMAEEKMVGIPVNLIELDEILKSWKGQVDCIVLGCTHFPFLRKEIKEILGRNVLLIDSGEAIARRVKQLLGSVDANKGDHLFGEVYCSASTKNEEALNKTFKELDFNPLQTLGYPKSLDR</sequence>
<gene>
    <name evidence="1" type="primary">murI</name>
    <name type="ordered locus">VSAL_I2884</name>
</gene>
<proteinExistence type="inferred from homology"/>
<dbReference type="EC" id="5.1.1.3" evidence="1"/>
<dbReference type="EMBL" id="FM178379">
    <property type="protein sequence ID" value="CAQ80568.1"/>
    <property type="molecule type" value="Genomic_DNA"/>
</dbReference>
<dbReference type="RefSeq" id="WP_012551302.1">
    <property type="nucleotide sequence ID" value="NC_011312.1"/>
</dbReference>
<dbReference type="SMR" id="B6ENT1"/>
<dbReference type="KEGG" id="vsa:VSAL_I2884"/>
<dbReference type="eggNOG" id="COG0796">
    <property type="taxonomic scope" value="Bacteria"/>
</dbReference>
<dbReference type="HOGENOM" id="CLU_052344_2_0_6"/>
<dbReference type="UniPathway" id="UPA00219"/>
<dbReference type="Proteomes" id="UP000001730">
    <property type="component" value="Chromosome 1"/>
</dbReference>
<dbReference type="GO" id="GO:0008881">
    <property type="term" value="F:glutamate racemase activity"/>
    <property type="evidence" value="ECO:0007669"/>
    <property type="project" value="UniProtKB-UniRule"/>
</dbReference>
<dbReference type="GO" id="GO:0071555">
    <property type="term" value="P:cell wall organization"/>
    <property type="evidence" value="ECO:0007669"/>
    <property type="project" value="UniProtKB-KW"/>
</dbReference>
<dbReference type="GO" id="GO:0009252">
    <property type="term" value="P:peptidoglycan biosynthetic process"/>
    <property type="evidence" value="ECO:0007669"/>
    <property type="project" value="UniProtKB-UniRule"/>
</dbReference>
<dbReference type="GO" id="GO:0008360">
    <property type="term" value="P:regulation of cell shape"/>
    <property type="evidence" value="ECO:0007669"/>
    <property type="project" value="UniProtKB-KW"/>
</dbReference>
<dbReference type="FunFam" id="3.40.50.1860:FF:000001">
    <property type="entry name" value="Glutamate racemase"/>
    <property type="match status" value="1"/>
</dbReference>
<dbReference type="Gene3D" id="3.40.50.1860">
    <property type="match status" value="2"/>
</dbReference>
<dbReference type="HAMAP" id="MF_00258">
    <property type="entry name" value="Glu_racemase"/>
    <property type="match status" value="1"/>
</dbReference>
<dbReference type="InterPro" id="IPR015942">
    <property type="entry name" value="Asp/Glu/hydantoin_racemase"/>
</dbReference>
<dbReference type="InterPro" id="IPR001920">
    <property type="entry name" value="Asp/Glu_race"/>
</dbReference>
<dbReference type="InterPro" id="IPR018187">
    <property type="entry name" value="Asp/Glu_racemase_AS_1"/>
</dbReference>
<dbReference type="InterPro" id="IPR033134">
    <property type="entry name" value="Asp/Glu_racemase_AS_2"/>
</dbReference>
<dbReference type="InterPro" id="IPR004391">
    <property type="entry name" value="Glu_race"/>
</dbReference>
<dbReference type="NCBIfam" id="TIGR00067">
    <property type="entry name" value="glut_race"/>
    <property type="match status" value="1"/>
</dbReference>
<dbReference type="PANTHER" id="PTHR21198">
    <property type="entry name" value="GLUTAMATE RACEMASE"/>
    <property type="match status" value="1"/>
</dbReference>
<dbReference type="PANTHER" id="PTHR21198:SF2">
    <property type="entry name" value="GLUTAMATE RACEMASE"/>
    <property type="match status" value="1"/>
</dbReference>
<dbReference type="Pfam" id="PF01177">
    <property type="entry name" value="Asp_Glu_race"/>
    <property type="match status" value="1"/>
</dbReference>
<dbReference type="SUPFAM" id="SSF53681">
    <property type="entry name" value="Aspartate/glutamate racemase"/>
    <property type="match status" value="2"/>
</dbReference>
<dbReference type="PROSITE" id="PS00923">
    <property type="entry name" value="ASP_GLU_RACEMASE_1"/>
    <property type="match status" value="1"/>
</dbReference>
<dbReference type="PROSITE" id="PS00924">
    <property type="entry name" value="ASP_GLU_RACEMASE_2"/>
    <property type="match status" value="1"/>
</dbReference>
<feature type="chain" id="PRO_1000114032" description="Glutamate racemase">
    <location>
        <begin position="1"/>
        <end position="265"/>
    </location>
</feature>
<feature type="active site" description="Proton donor/acceptor" evidence="1">
    <location>
        <position position="73"/>
    </location>
</feature>
<feature type="active site" description="Proton donor/acceptor" evidence="1">
    <location>
        <position position="180"/>
    </location>
</feature>
<feature type="binding site" evidence="1">
    <location>
        <begin position="9"/>
        <end position="10"/>
    </location>
    <ligand>
        <name>substrate</name>
    </ligand>
</feature>
<feature type="binding site" evidence="1">
    <location>
        <begin position="41"/>
        <end position="42"/>
    </location>
    <ligand>
        <name>substrate</name>
    </ligand>
</feature>
<feature type="binding site" evidence="1">
    <location>
        <begin position="74"/>
        <end position="75"/>
    </location>
    <ligand>
        <name>substrate</name>
    </ligand>
</feature>
<feature type="binding site" evidence="1">
    <location>
        <begin position="181"/>
        <end position="182"/>
    </location>
    <ligand>
        <name>substrate</name>
    </ligand>
</feature>
<name>MURI_ALISL</name>